<reference key="1">
    <citation type="journal article" date="2006" name="Proc. Natl. Acad. Sci. U.S.A.">
        <title>Genome reduction in Leptospira borgpetersenii reflects limited transmission potential.</title>
        <authorList>
            <person name="Bulach D.M."/>
            <person name="Zuerner R.L."/>
            <person name="Wilson P."/>
            <person name="Seemann T."/>
            <person name="McGrath A."/>
            <person name="Cullen P.A."/>
            <person name="Davis J."/>
            <person name="Johnson M."/>
            <person name="Kuczek E."/>
            <person name="Alt D.P."/>
            <person name="Peterson-Burch B."/>
            <person name="Coppel R.L."/>
            <person name="Rood J.I."/>
            <person name="Davies J.K."/>
            <person name="Adler B."/>
        </authorList>
    </citation>
    <scope>NUCLEOTIDE SEQUENCE [LARGE SCALE GENOMIC DNA]</scope>
    <source>
        <strain>JB197</strain>
    </source>
</reference>
<gene>
    <name evidence="1" type="primary">asnS</name>
    <name type="ordered locus">LBJ_1650</name>
</gene>
<protein>
    <recommendedName>
        <fullName evidence="1">Asparagine--tRNA ligase</fullName>
        <ecNumber evidence="1">6.1.1.22</ecNumber>
    </recommendedName>
    <alternativeName>
        <fullName evidence="1">Asparaginyl-tRNA synthetase</fullName>
        <shortName evidence="1">AsnRS</shortName>
    </alternativeName>
</protein>
<organism>
    <name type="scientific">Leptospira borgpetersenii serovar Hardjo-bovis (strain JB197)</name>
    <dbReference type="NCBI Taxonomy" id="355277"/>
    <lineage>
        <taxon>Bacteria</taxon>
        <taxon>Pseudomonadati</taxon>
        <taxon>Spirochaetota</taxon>
        <taxon>Spirochaetia</taxon>
        <taxon>Leptospirales</taxon>
        <taxon>Leptospiraceae</taxon>
        <taxon>Leptospira</taxon>
    </lineage>
</organism>
<accession>Q04SB3</accession>
<evidence type="ECO:0000255" key="1">
    <source>
        <dbReference type="HAMAP-Rule" id="MF_00534"/>
    </source>
</evidence>
<name>SYN_LEPBJ</name>
<keyword id="KW-0030">Aminoacyl-tRNA synthetase</keyword>
<keyword id="KW-0067">ATP-binding</keyword>
<keyword id="KW-0963">Cytoplasm</keyword>
<keyword id="KW-0436">Ligase</keyword>
<keyword id="KW-0547">Nucleotide-binding</keyword>
<keyword id="KW-0648">Protein biosynthesis</keyword>
<sequence length="435" mass="49892">MSEIPIVSNHDLEKYVDRKVVIQGWVHGIRGSNARQFISLRNGGRILQVLAEKEILGEEVFQTVKHLRQETSVSVAGTLVKNEKSSVGFELIMDRIRIVGESENYPITPKEHGIDFLISQRHLWLRSSKQLAILRVRDNLSFAIRKYFHERDFLLIDTPILTGSVGESAGTLFSTEYFDLGNAYLAQTGQLYLEAAIFAHNKVFCYGPTFRAEKSKTRRHLTEFWMVEAEVAFAGHADNLKLQEDFVKTVIKETVQNSLQDLKVLERDPTPLLAYLEKDFPVIDYTKALEILKLKGEDIVWGDDINSEREQMLTMEFGGPIFIQKYPREAKAFYMKVNPDNPKTVLNADLIAPDGVGEIIGGSEREENYENIILRLEEEKLPVESYDWYLDLRKYGSVPHSGFGLGSERMIAWICGLQHVRECIPFPRMMERLYP</sequence>
<feature type="chain" id="PRO_1000128210" description="Asparagine--tRNA ligase">
    <location>
        <begin position="1"/>
        <end position="435"/>
    </location>
</feature>
<proteinExistence type="inferred from homology"/>
<dbReference type="EC" id="6.1.1.22" evidence="1"/>
<dbReference type="EMBL" id="CP000350">
    <property type="protein sequence ID" value="ABJ76207.1"/>
    <property type="molecule type" value="Genomic_DNA"/>
</dbReference>
<dbReference type="RefSeq" id="WP_011670404.1">
    <property type="nucleotide sequence ID" value="NC_008510.1"/>
</dbReference>
<dbReference type="SMR" id="Q04SB3"/>
<dbReference type="KEGG" id="lbj:LBJ_1650"/>
<dbReference type="HOGENOM" id="CLU_004553_2_0_12"/>
<dbReference type="Proteomes" id="UP000000656">
    <property type="component" value="Chromosome 1"/>
</dbReference>
<dbReference type="GO" id="GO:0005737">
    <property type="term" value="C:cytoplasm"/>
    <property type="evidence" value="ECO:0007669"/>
    <property type="project" value="UniProtKB-SubCell"/>
</dbReference>
<dbReference type="GO" id="GO:0004816">
    <property type="term" value="F:asparagine-tRNA ligase activity"/>
    <property type="evidence" value="ECO:0007669"/>
    <property type="project" value="UniProtKB-UniRule"/>
</dbReference>
<dbReference type="GO" id="GO:0005524">
    <property type="term" value="F:ATP binding"/>
    <property type="evidence" value="ECO:0007669"/>
    <property type="project" value="UniProtKB-UniRule"/>
</dbReference>
<dbReference type="GO" id="GO:0003676">
    <property type="term" value="F:nucleic acid binding"/>
    <property type="evidence" value="ECO:0007669"/>
    <property type="project" value="InterPro"/>
</dbReference>
<dbReference type="GO" id="GO:0006421">
    <property type="term" value="P:asparaginyl-tRNA aminoacylation"/>
    <property type="evidence" value="ECO:0007669"/>
    <property type="project" value="UniProtKB-UniRule"/>
</dbReference>
<dbReference type="CDD" id="cd04323">
    <property type="entry name" value="AsnRS_cyto_like_N"/>
    <property type="match status" value="1"/>
</dbReference>
<dbReference type="CDD" id="cd00776">
    <property type="entry name" value="AsxRS_core"/>
    <property type="match status" value="1"/>
</dbReference>
<dbReference type="Gene3D" id="3.30.930.10">
    <property type="entry name" value="Bira Bifunctional Protein, Domain 2"/>
    <property type="match status" value="1"/>
</dbReference>
<dbReference type="Gene3D" id="2.40.50.140">
    <property type="entry name" value="Nucleic acid-binding proteins"/>
    <property type="match status" value="1"/>
</dbReference>
<dbReference type="HAMAP" id="MF_00534">
    <property type="entry name" value="Asn_tRNA_synth"/>
    <property type="match status" value="1"/>
</dbReference>
<dbReference type="InterPro" id="IPR004364">
    <property type="entry name" value="Aa-tRNA-synt_II"/>
</dbReference>
<dbReference type="InterPro" id="IPR006195">
    <property type="entry name" value="aa-tRNA-synth_II"/>
</dbReference>
<dbReference type="InterPro" id="IPR045864">
    <property type="entry name" value="aa-tRNA-synth_II/BPL/LPL"/>
</dbReference>
<dbReference type="InterPro" id="IPR004522">
    <property type="entry name" value="Asn-tRNA-ligase"/>
</dbReference>
<dbReference type="InterPro" id="IPR002312">
    <property type="entry name" value="Asp/Asn-tRNA-synth_IIb"/>
</dbReference>
<dbReference type="InterPro" id="IPR012340">
    <property type="entry name" value="NA-bd_OB-fold"/>
</dbReference>
<dbReference type="InterPro" id="IPR004365">
    <property type="entry name" value="NA-bd_OB_tRNA"/>
</dbReference>
<dbReference type="NCBIfam" id="TIGR00457">
    <property type="entry name" value="asnS"/>
    <property type="match status" value="1"/>
</dbReference>
<dbReference type="NCBIfam" id="NF003037">
    <property type="entry name" value="PRK03932.1"/>
    <property type="match status" value="1"/>
</dbReference>
<dbReference type="PANTHER" id="PTHR22594:SF34">
    <property type="entry name" value="ASPARAGINE--TRNA LIGASE, MITOCHONDRIAL-RELATED"/>
    <property type="match status" value="1"/>
</dbReference>
<dbReference type="PANTHER" id="PTHR22594">
    <property type="entry name" value="ASPARTYL/LYSYL-TRNA SYNTHETASE"/>
    <property type="match status" value="1"/>
</dbReference>
<dbReference type="Pfam" id="PF00152">
    <property type="entry name" value="tRNA-synt_2"/>
    <property type="match status" value="1"/>
</dbReference>
<dbReference type="Pfam" id="PF01336">
    <property type="entry name" value="tRNA_anti-codon"/>
    <property type="match status" value="1"/>
</dbReference>
<dbReference type="PRINTS" id="PR01042">
    <property type="entry name" value="TRNASYNTHASP"/>
</dbReference>
<dbReference type="SUPFAM" id="SSF55681">
    <property type="entry name" value="Class II aaRS and biotin synthetases"/>
    <property type="match status" value="1"/>
</dbReference>
<dbReference type="SUPFAM" id="SSF50249">
    <property type="entry name" value="Nucleic acid-binding proteins"/>
    <property type="match status" value="1"/>
</dbReference>
<dbReference type="PROSITE" id="PS50862">
    <property type="entry name" value="AA_TRNA_LIGASE_II"/>
    <property type="match status" value="1"/>
</dbReference>
<comment type="catalytic activity">
    <reaction evidence="1">
        <text>tRNA(Asn) + L-asparagine + ATP = L-asparaginyl-tRNA(Asn) + AMP + diphosphate + H(+)</text>
        <dbReference type="Rhea" id="RHEA:11180"/>
        <dbReference type="Rhea" id="RHEA-COMP:9659"/>
        <dbReference type="Rhea" id="RHEA-COMP:9674"/>
        <dbReference type="ChEBI" id="CHEBI:15378"/>
        <dbReference type="ChEBI" id="CHEBI:30616"/>
        <dbReference type="ChEBI" id="CHEBI:33019"/>
        <dbReference type="ChEBI" id="CHEBI:58048"/>
        <dbReference type="ChEBI" id="CHEBI:78442"/>
        <dbReference type="ChEBI" id="CHEBI:78515"/>
        <dbReference type="ChEBI" id="CHEBI:456215"/>
        <dbReference type="EC" id="6.1.1.22"/>
    </reaction>
</comment>
<comment type="subunit">
    <text evidence="1">Homodimer.</text>
</comment>
<comment type="subcellular location">
    <subcellularLocation>
        <location evidence="1">Cytoplasm</location>
    </subcellularLocation>
</comment>
<comment type="similarity">
    <text evidence="1">Belongs to the class-II aminoacyl-tRNA synthetase family.</text>
</comment>